<organism>
    <name type="scientific">Oryza sativa subsp. japonica</name>
    <name type="common">Rice</name>
    <dbReference type="NCBI Taxonomy" id="39947"/>
    <lineage>
        <taxon>Eukaryota</taxon>
        <taxon>Viridiplantae</taxon>
        <taxon>Streptophyta</taxon>
        <taxon>Embryophyta</taxon>
        <taxon>Tracheophyta</taxon>
        <taxon>Spermatophyta</taxon>
        <taxon>Magnoliopsida</taxon>
        <taxon>Liliopsida</taxon>
        <taxon>Poales</taxon>
        <taxon>Poaceae</taxon>
        <taxon>BOP clade</taxon>
        <taxon>Oryzoideae</taxon>
        <taxon>Oryzeae</taxon>
        <taxon>Oryzinae</taxon>
        <taxon>Oryza</taxon>
        <taxon>Oryza sativa</taxon>
    </lineage>
</organism>
<proteinExistence type="evidence at transcript level"/>
<feature type="chain" id="PRO_0000370295" description="CASP-like protein 1E1">
    <location>
        <begin position="1"/>
        <end position="215"/>
    </location>
</feature>
<feature type="topological domain" description="Cytoplasmic" evidence="2">
    <location>
        <begin position="1"/>
        <end position="51"/>
    </location>
</feature>
<feature type="transmembrane region" description="Helical" evidence="2">
    <location>
        <begin position="52"/>
        <end position="72"/>
    </location>
</feature>
<feature type="topological domain" description="Extracellular" evidence="2">
    <location>
        <begin position="73"/>
        <end position="103"/>
    </location>
</feature>
<feature type="transmembrane region" description="Helical" evidence="2">
    <location>
        <begin position="104"/>
        <end position="124"/>
    </location>
</feature>
<feature type="topological domain" description="Cytoplasmic" evidence="2">
    <location>
        <begin position="125"/>
        <end position="130"/>
    </location>
</feature>
<feature type="transmembrane region" description="Helical" evidence="2">
    <location>
        <begin position="131"/>
        <end position="151"/>
    </location>
</feature>
<feature type="topological domain" description="Extracellular" evidence="2">
    <location>
        <begin position="152"/>
        <end position="185"/>
    </location>
</feature>
<feature type="transmembrane region" description="Helical" evidence="2">
    <location>
        <begin position="186"/>
        <end position="206"/>
    </location>
</feature>
<feature type="topological domain" description="Cytoplasmic" evidence="2">
    <location>
        <begin position="207"/>
        <end position="215"/>
    </location>
</feature>
<feature type="sequence conflict" description="In Ref. 5; EAZ11885." evidence="3" ref="5">
    <original>V</original>
    <variation>VV</variation>
    <location>
        <position position="48"/>
    </location>
</feature>
<name>CSPL8_ORYSJ</name>
<gene>
    <name type="ordered locus">Os01g0363300</name>
    <name type="ordered locus">LOC_Os01g26120</name>
    <name type="ORF">OsJ_01759</name>
    <name type="ORF">P0460H02.47</name>
    <name type="ORF">P0503E05.9</name>
</gene>
<comment type="subunit">
    <text evidence="1">Homodimer and heterodimers.</text>
</comment>
<comment type="subcellular location">
    <subcellularLocation>
        <location evidence="1">Cell membrane</location>
        <topology evidence="1">Multi-pass membrane protein</topology>
    </subcellularLocation>
</comment>
<comment type="similarity">
    <text evidence="3">Belongs to the Casparian strip membrane proteins (CASP) family.</text>
</comment>
<comment type="sequence caution" evidence="3">
    <conflict type="erroneous gene model prediction">
        <sequence resource="EMBL-CDS" id="EAZ11885"/>
    </conflict>
</comment>
<comment type="sequence caution" evidence="3">
    <conflict type="frameshift">
        <sequence resource="EMBL-CDS" id="EAZ11885"/>
    </conflict>
</comment>
<protein>
    <recommendedName>
        <fullName>CASP-like protein 1E1</fullName>
        <shortName>OsCASPL1E1</shortName>
    </recommendedName>
</protein>
<keyword id="KW-1003">Cell membrane</keyword>
<keyword id="KW-0472">Membrane</keyword>
<keyword id="KW-1185">Reference proteome</keyword>
<keyword id="KW-0812">Transmembrane</keyword>
<keyword id="KW-1133">Transmembrane helix</keyword>
<evidence type="ECO:0000250" key="1"/>
<evidence type="ECO:0000255" key="2"/>
<evidence type="ECO:0000305" key="3"/>
<accession>Q9ARX2</accession>
<accession>A0A0P0V2U2</accession>
<accession>A2ZT38</accession>
<reference key="1">
    <citation type="journal article" date="2002" name="Nature">
        <title>The genome sequence and structure of rice chromosome 1.</title>
        <authorList>
            <person name="Sasaki T."/>
            <person name="Matsumoto T."/>
            <person name="Yamamoto K."/>
            <person name="Sakata K."/>
            <person name="Baba T."/>
            <person name="Katayose Y."/>
            <person name="Wu J."/>
            <person name="Niimura Y."/>
            <person name="Cheng Z."/>
            <person name="Nagamura Y."/>
            <person name="Antonio B.A."/>
            <person name="Kanamori H."/>
            <person name="Hosokawa S."/>
            <person name="Masukawa M."/>
            <person name="Arikawa K."/>
            <person name="Chiden Y."/>
            <person name="Hayashi M."/>
            <person name="Okamoto M."/>
            <person name="Ando T."/>
            <person name="Aoki H."/>
            <person name="Arita K."/>
            <person name="Hamada M."/>
            <person name="Harada C."/>
            <person name="Hijishita S."/>
            <person name="Honda M."/>
            <person name="Ichikawa Y."/>
            <person name="Idonuma A."/>
            <person name="Iijima M."/>
            <person name="Ikeda M."/>
            <person name="Ikeno M."/>
            <person name="Ito S."/>
            <person name="Ito T."/>
            <person name="Ito Y."/>
            <person name="Ito Y."/>
            <person name="Iwabuchi A."/>
            <person name="Kamiya K."/>
            <person name="Karasawa W."/>
            <person name="Katagiri S."/>
            <person name="Kikuta A."/>
            <person name="Kobayashi N."/>
            <person name="Kono I."/>
            <person name="Machita K."/>
            <person name="Maehara T."/>
            <person name="Mizuno H."/>
            <person name="Mizubayashi T."/>
            <person name="Mukai Y."/>
            <person name="Nagasaki H."/>
            <person name="Nakashima M."/>
            <person name="Nakama Y."/>
            <person name="Nakamichi Y."/>
            <person name="Nakamura M."/>
            <person name="Namiki N."/>
            <person name="Negishi M."/>
            <person name="Ohta I."/>
            <person name="Ono N."/>
            <person name="Saji S."/>
            <person name="Sakai K."/>
            <person name="Shibata M."/>
            <person name="Shimokawa T."/>
            <person name="Shomura A."/>
            <person name="Song J."/>
            <person name="Takazaki Y."/>
            <person name="Terasawa K."/>
            <person name="Tsuji K."/>
            <person name="Waki K."/>
            <person name="Yamagata H."/>
            <person name="Yamane H."/>
            <person name="Yoshiki S."/>
            <person name="Yoshihara R."/>
            <person name="Yukawa K."/>
            <person name="Zhong H."/>
            <person name="Iwama H."/>
            <person name="Endo T."/>
            <person name="Ito H."/>
            <person name="Hahn J.H."/>
            <person name="Kim H.-I."/>
            <person name="Eun M.-Y."/>
            <person name="Yano M."/>
            <person name="Jiang J."/>
            <person name="Gojobori T."/>
        </authorList>
    </citation>
    <scope>NUCLEOTIDE SEQUENCE [LARGE SCALE GENOMIC DNA]</scope>
    <source>
        <strain>cv. Nipponbare</strain>
    </source>
</reference>
<reference key="2">
    <citation type="journal article" date="2005" name="Nature">
        <title>The map-based sequence of the rice genome.</title>
        <authorList>
            <consortium name="International rice genome sequencing project (IRGSP)"/>
        </authorList>
    </citation>
    <scope>NUCLEOTIDE SEQUENCE [LARGE SCALE GENOMIC DNA]</scope>
    <source>
        <strain>cv. Nipponbare</strain>
    </source>
</reference>
<reference key="3">
    <citation type="journal article" date="2008" name="Nucleic Acids Res.">
        <title>The rice annotation project database (RAP-DB): 2008 update.</title>
        <authorList>
            <consortium name="The rice annotation project (RAP)"/>
        </authorList>
    </citation>
    <scope>GENOME REANNOTATION</scope>
    <source>
        <strain>cv. Nipponbare</strain>
    </source>
</reference>
<reference key="4">
    <citation type="journal article" date="2013" name="Rice">
        <title>Improvement of the Oryza sativa Nipponbare reference genome using next generation sequence and optical map data.</title>
        <authorList>
            <person name="Kawahara Y."/>
            <person name="de la Bastide M."/>
            <person name="Hamilton J.P."/>
            <person name="Kanamori H."/>
            <person name="McCombie W.R."/>
            <person name="Ouyang S."/>
            <person name="Schwartz D.C."/>
            <person name="Tanaka T."/>
            <person name="Wu J."/>
            <person name="Zhou S."/>
            <person name="Childs K.L."/>
            <person name="Davidson R.M."/>
            <person name="Lin H."/>
            <person name="Quesada-Ocampo L."/>
            <person name="Vaillancourt B."/>
            <person name="Sakai H."/>
            <person name="Lee S.S."/>
            <person name="Kim J."/>
            <person name="Numa H."/>
            <person name="Itoh T."/>
            <person name="Buell C.R."/>
            <person name="Matsumoto T."/>
        </authorList>
    </citation>
    <scope>GENOME REANNOTATION</scope>
    <source>
        <strain>cv. Nipponbare</strain>
    </source>
</reference>
<reference key="5">
    <citation type="journal article" date="2005" name="PLoS Biol.">
        <title>The genomes of Oryza sativa: a history of duplications.</title>
        <authorList>
            <person name="Yu J."/>
            <person name="Wang J."/>
            <person name="Lin W."/>
            <person name="Li S."/>
            <person name="Li H."/>
            <person name="Zhou J."/>
            <person name="Ni P."/>
            <person name="Dong W."/>
            <person name="Hu S."/>
            <person name="Zeng C."/>
            <person name="Zhang J."/>
            <person name="Zhang Y."/>
            <person name="Li R."/>
            <person name="Xu Z."/>
            <person name="Li S."/>
            <person name="Li X."/>
            <person name="Zheng H."/>
            <person name="Cong L."/>
            <person name="Lin L."/>
            <person name="Yin J."/>
            <person name="Geng J."/>
            <person name="Li G."/>
            <person name="Shi J."/>
            <person name="Liu J."/>
            <person name="Lv H."/>
            <person name="Li J."/>
            <person name="Wang J."/>
            <person name="Deng Y."/>
            <person name="Ran L."/>
            <person name="Shi X."/>
            <person name="Wang X."/>
            <person name="Wu Q."/>
            <person name="Li C."/>
            <person name="Ren X."/>
            <person name="Wang J."/>
            <person name="Wang X."/>
            <person name="Li D."/>
            <person name="Liu D."/>
            <person name="Zhang X."/>
            <person name="Ji Z."/>
            <person name="Zhao W."/>
            <person name="Sun Y."/>
            <person name="Zhang Z."/>
            <person name="Bao J."/>
            <person name="Han Y."/>
            <person name="Dong L."/>
            <person name="Ji J."/>
            <person name="Chen P."/>
            <person name="Wu S."/>
            <person name="Liu J."/>
            <person name="Xiao Y."/>
            <person name="Bu D."/>
            <person name="Tan J."/>
            <person name="Yang L."/>
            <person name="Ye C."/>
            <person name="Zhang J."/>
            <person name="Xu J."/>
            <person name="Zhou Y."/>
            <person name="Yu Y."/>
            <person name="Zhang B."/>
            <person name="Zhuang S."/>
            <person name="Wei H."/>
            <person name="Liu B."/>
            <person name="Lei M."/>
            <person name="Yu H."/>
            <person name="Li Y."/>
            <person name="Xu H."/>
            <person name="Wei S."/>
            <person name="He X."/>
            <person name="Fang L."/>
            <person name="Zhang Z."/>
            <person name="Zhang Y."/>
            <person name="Huang X."/>
            <person name="Su Z."/>
            <person name="Tong W."/>
            <person name="Li J."/>
            <person name="Tong Z."/>
            <person name="Li S."/>
            <person name="Ye J."/>
            <person name="Wang L."/>
            <person name="Fang L."/>
            <person name="Lei T."/>
            <person name="Chen C.-S."/>
            <person name="Chen H.-C."/>
            <person name="Xu Z."/>
            <person name="Li H."/>
            <person name="Huang H."/>
            <person name="Zhang F."/>
            <person name="Xu H."/>
            <person name="Li N."/>
            <person name="Zhao C."/>
            <person name="Li S."/>
            <person name="Dong L."/>
            <person name="Huang Y."/>
            <person name="Li L."/>
            <person name="Xi Y."/>
            <person name="Qi Q."/>
            <person name="Li W."/>
            <person name="Zhang B."/>
            <person name="Hu W."/>
            <person name="Zhang Y."/>
            <person name="Tian X."/>
            <person name="Jiao Y."/>
            <person name="Liang X."/>
            <person name="Jin J."/>
            <person name="Gao L."/>
            <person name="Zheng W."/>
            <person name="Hao B."/>
            <person name="Liu S.-M."/>
            <person name="Wang W."/>
            <person name="Yuan L."/>
            <person name="Cao M."/>
            <person name="McDermott J."/>
            <person name="Samudrala R."/>
            <person name="Wang J."/>
            <person name="Wong G.K.-S."/>
            <person name="Yang H."/>
        </authorList>
    </citation>
    <scope>NUCLEOTIDE SEQUENCE [LARGE SCALE GENOMIC DNA]</scope>
    <source>
        <strain>cv. Nipponbare</strain>
    </source>
</reference>
<reference key="6">
    <citation type="journal article" date="2003" name="Science">
        <title>Collection, mapping, and annotation of over 28,000 cDNA clones from japonica rice.</title>
        <authorList>
            <consortium name="The rice full-length cDNA consortium"/>
        </authorList>
    </citation>
    <scope>NUCLEOTIDE SEQUENCE [LARGE SCALE MRNA]</scope>
    <source>
        <strain>cv. Nipponbare</strain>
    </source>
</reference>
<reference key="7">
    <citation type="journal article" date="2014" name="Plant Physiol.">
        <title>Functional and evolutionary analysis of the CASPARIAN STRIP MEMBRANE DOMAIN PROTEIN family.</title>
        <authorList>
            <person name="Roppolo D."/>
            <person name="Boeckmann B."/>
            <person name="Pfister A."/>
            <person name="Boutet E."/>
            <person name="Rubio M.C."/>
            <person name="Denervaud-Tendon V."/>
            <person name="Vermeer J.E."/>
            <person name="Gheyselinck J."/>
            <person name="Xenarios I."/>
            <person name="Geldner N."/>
        </authorList>
    </citation>
    <scope>GENE FAMILY</scope>
    <scope>NOMENCLATURE</scope>
</reference>
<dbReference type="EMBL" id="AP003021">
    <property type="protein sequence ID" value="BAB40002.1"/>
    <property type="molecule type" value="Genomic_DNA"/>
</dbReference>
<dbReference type="EMBL" id="AP003257">
    <property type="protein sequence ID" value="BAB61250.1"/>
    <property type="molecule type" value="Genomic_DNA"/>
</dbReference>
<dbReference type="EMBL" id="AP008207">
    <property type="protein sequence ID" value="BAF04945.1"/>
    <property type="molecule type" value="Genomic_DNA"/>
</dbReference>
<dbReference type="EMBL" id="AP014957">
    <property type="protein sequence ID" value="BAS72116.1"/>
    <property type="molecule type" value="Genomic_DNA"/>
</dbReference>
<dbReference type="EMBL" id="CM000138">
    <property type="protein sequence ID" value="EAZ11885.1"/>
    <property type="status" value="ALT_SEQ"/>
    <property type="molecule type" value="Genomic_DNA"/>
</dbReference>
<dbReference type="EMBL" id="AK060356">
    <property type="protein sequence ID" value="BAG87420.1"/>
    <property type="molecule type" value="mRNA"/>
</dbReference>
<dbReference type="RefSeq" id="XP_015643147.1">
    <property type="nucleotide sequence ID" value="XM_015787661.1"/>
</dbReference>
<dbReference type="SMR" id="Q9ARX2"/>
<dbReference type="FunCoup" id="Q9ARX2">
    <property type="interactions" value="310"/>
</dbReference>
<dbReference type="STRING" id="39947.Q9ARX2"/>
<dbReference type="PaxDb" id="39947-Q9ARX2"/>
<dbReference type="EnsemblPlants" id="Os01t0363300-01">
    <property type="protein sequence ID" value="Os01t0363300-01"/>
    <property type="gene ID" value="Os01g0363300"/>
</dbReference>
<dbReference type="EnsemblPlants" id="Os01t0363300-02">
    <property type="protein sequence ID" value="Os01t0363300-02"/>
    <property type="gene ID" value="Os01g0363300"/>
</dbReference>
<dbReference type="Gramene" id="Os01t0363300-01">
    <property type="protein sequence ID" value="Os01t0363300-01"/>
    <property type="gene ID" value="Os01g0363300"/>
</dbReference>
<dbReference type="Gramene" id="Os01t0363300-02">
    <property type="protein sequence ID" value="Os01t0363300-02"/>
    <property type="gene ID" value="Os01g0363300"/>
</dbReference>
<dbReference type="KEGG" id="dosa:Os01g0363300"/>
<dbReference type="eggNOG" id="ENOG502RZNK">
    <property type="taxonomic scope" value="Eukaryota"/>
</dbReference>
<dbReference type="HOGENOM" id="CLU_066104_1_1_1"/>
<dbReference type="InParanoid" id="Q9ARX2"/>
<dbReference type="OMA" id="NNLNGME"/>
<dbReference type="OrthoDB" id="772477at2759"/>
<dbReference type="Proteomes" id="UP000000763">
    <property type="component" value="Chromosome 1"/>
</dbReference>
<dbReference type="Proteomes" id="UP000007752">
    <property type="component" value="Chromosome 1"/>
</dbReference>
<dbReference type="Proteomes" id="UP000059680">
    <property type="component" value="Chromosome 1"/>
</dbReference>
<dbReference type="GO" id="GO:0005886">
    <property type="term" value="C:plasma membrane"/>
    <property type="evidence" value="ECO:0007669"/>
    <property type="project" value="UniProtKB-SubCell"/>
</dbReference>
<dbReference type="InterPro" id="IPR006459">
    <property type="entry name" value="CASP/CASPL"/>
</dbReference>
<dbReference type="InterPro" id="IPR006702">
    <property type="entry name" value="CASP_dom"/>
</dbReference>
<dbReference type="InterPro" id="IPR044173">
    <property type="entry name" value="CASPL"/>
</dbReference>
<dbReference type="NCBIfam" id="TIGR01569">
    <property type="entry name" value="A_tha_TIGR01569"/>
    <property type="match status" value="1"/>
</dbReference>
<dbReference type="PANTHER" id="PTHR36488">
    <property type="entry name" value="CASP-LIKE PROTEIN 1U1"/>
    <property type="match status" value="1"/>
</dbReference>
<dbReference type="PANTHER" id="PTHR36488:SF8">
    <property type="entry name" value="CASP-LIKE PROTEIN 1U1"/>
    <property type="match status" value="1"/>
</dbReference>
<dbReference type="Pfam" id="PF04535">
    <property type="entry name" value="CASP_dom"/>
    <property type="match status" value="1"/>
</dbReference>
<sequence length="215" mass="22250">MESSRGKPGLNGSGGGAAAFDYSSRRGYYTGAGAALPPLAAGSRAPPVDPCCVVLRVFVLLGTLASAVVMAADRQSTTVQIAAGEELAPPLRVPVTAKWTYSSAFVYFVVANAMVFAFSAAALAAVRRRSAVVPVMVGDLVAMALLFSAVGAAAQFGLLGERGNAHVRWAKVCDVYGPFCERAMAAVVVALIAAFADLVLLMLTILTIHKASSYY</sequence>